<reference key="1">
    <citation type="journal article" date="2004" name="Nat. Biotechnol.">
        <title>Complete sequence and comparative genome analysis of the dairy bacterium Streptococcus thermophilus.</title>
        <authorList>
            <person name="Bolotin A."/>
            <person name="Quinquis B."/>
            <person name="Renault P."/>
            <person name="Sorokin A."/>
            <person name="Ehrlich S.D."/>
            <person name="Kulakauskas S."/>
            <person name="Lapidus A."/>
            <person name="Goltsman E."/>
            <person name="Mazur M."/>
            <person name="Pusch G.D."/>
            <person name="Fonstein M."/>
            <person name="Overbeek R."/>
            <person name="Kyprides N."/>
            <person name="Purnelle B."/>
            <person name="Prozzi D."/>
            <person name="Ngui K."/>
            <person name="Masuy D."/>
            <person name="Hancy F."/>
            <person name="Burteau S."/>
            <person name="Boutry M."/>
            <person name="Delcour J."/>
            <person name="Goffeau A."/>
            <person name="Hols P."/>
        </authorList>
    </citation>
    <scope>NUCLEOTIDE SEQUENCE [LARGE SCALE GENOMIC DNA]</scope>
    <source>
        <strain>ATCC BAA-250 / LMG 18311</strain>
    </source>
</reference>
<name>RL6_STRT2</name>
<protein>
    <recommendedName>
        <fullName evidence="1">Large ribosomal subunit protein uL6</fullName>
    </recommendedName>
    <alternativeName>
        <fullName evidence="2">50S ribosomal protein L6</fullName>
    </alternativeName>
</protein>
<sequence>MSRIGNKVITLPAGVEITNNDNVVTVKGPKGELTREFNKNIEIKVEGNEVTLHRPNDSKENKTIHGTSRANLNNMVVGVSEGFKKELEMHGVGYRAQLQGTKLVLSVGKSHQDEVEAPEGITFEVPSATSIVVSGINKEVVGQTAAYIRSLRSPEPYKGKGIRYVGEYVRRKEGKTGK</sequence>
<evidence type="ECO:0000255" key="1">
    <source>
        <dbReference type="HAMAP-Rule" id="MF_01365"/>
    </source>
</evidence>
<evidence type="ECO:0000305" key="2"/>
<comment type="function">
    <text evidence="1">This protein binds to the 23S rRNA, and is important in its secondary structure. It is located near the subunit interface in the base of the L7/L12 stalk, and near the tRNA binding site of the peptidyltransferase center.</text>
</comment>
<comment type="subunit">
    <text evidence="1">Part of the 50S ribosomal subunit.</text>
</comment>
<comment type="similarity">
    <text evidence="1">Belongs to the universal ribosomal protein uL6 family.</text>
</comment>
<feature type="chain" id="PRO_0000260955" description="Large ribosomal subunit protein uL6">
    <location>
        <begin position="1"/>
        <end position="178"/>
    </location>
</feature>
<proteinExistence type="inferred from homology"/>
<accession>Q5M2C8</accession>
<dbReference type="EMBL" id="CP000023">
    <property type="protein sequence ID" value="AAV61517.1"/>
    <property type="molecule type" value="Genomic_DNA"/>
</dbReference>
<dbReference type="RefSeq" id="WP_002946167.1">
    <property type="nucleotide sequence ID" value="NC_006448.1"/>
</dbReference>
<dbReference type="SMR" id="Q5M2C8"/>
<dbReference type="STRING" id="264199.stu1919"/>
<dbReference type="GeneID" id="66899647"/>
<dbReference type="KEGG" id="stl:stu1919"/>
<dbReference type="eggNOG" id="COG0097">
    <property type="taxonomic scope" value="Bacteria"/>
</dbReference>
<dbReference type="HOGENOM" id="CLU_065464_1_2_9"/>
<dbReference type="Proteomes" id="UP000001170">
    <property type="component" value="Chromosome"/>
</dbReference>
<dbReference type="GO" id="GO:0022625">
    <property type="term" value="C:cytosolic large ribosomal subunit"/>
    <property type="evidence" value="ECO:0007669"/>
    <property type="project" value="TreeGrafter"/>
</dbReference>
<dbReference type="GO" id="GO:0019843">
    <property type="term" value="F:rRNA binding"/>
    <property type="evidence" value="ECO:0007669"/>
    <property type="project" value="UniProtKB-UniRule"/>
</dbReference>
<dbReference type="GO" id="GO:0003735">
    <property type="term" value="F:structural constituent of ribosome"/>
    <property type="evidence" value="ECO:0007669"/>
    <property type="project" value="InterPro"/>
</dbReference>
<dbReference type="GO" id="GO:0002181">
    <property type="term" value="P:cytoplasmic translation"/>
    <property type="evidence" value="ECO:0007669"/>
    <property type="project" value="TreeGrafter"/>
</dbReference>
<dbReference type="FunFam" id="3.90.930.12:FF:000001">
    <property type="entry name" value="50S ribosomal protein L6"/>
    <property type="match status" value="1"/>
</dbReference>
<dbReference type="FunFam" id="3.90.930.12:FF:000002">
    <property type="entry name" value="50S ribosomal protein L6"/>
    <property type="match status" value="1"/>
</dbReference>
<dbReference type="Gene3D" id="3.90.930.12">
    <property type="entry name" value="Ribosomal protein L6, alpha-beta domain"/>
    <property type="match status" value="2"/>
</dbReference>
<dbReference type="HAMAP" id="MF_01365_B">
    <property type="entry name" value="Ribosomal_uL6_B"/>
    <property type="match status" value="1"/>
</dbReference>
<dbReference type="InterPro" id="IPR000702">
    <property type="entry name" value="Ribosomal_uL6-like"/>
</dbReference>
<dbReference type="InterPro" id="IPR036789">
    <property type="entry name" value="Ribosomal_uL6-like_a/b-dom_sf"/>
</dbReference>
<dbReference type="InterPro" id="IPR020040">
    <property type="entry name" value="Ribosomal_uL6_a/b-dom"/>
</dbReference>
<dbReference type="InterPro" id="IPR019906">
    <property type="entry name" value="Ribosomal_uL6_bac-type"/>
</dbReference>
<dbReference type="InterPro" id="IPR002358">
    <property type="entry name" value="Ribosomal_uL6_CS"/>
</dbReference>
<dbReference type="NCBIfam" id="TIGR03654">
    <property type="entry name" value="L6_bact"/>
    <property type="match status" value="1"/>
</dbReference>
<dbReference type="PANTHER" id="PTHR11655">
    <property type="entry name" value="60S/50S RIBOSOMAL PROTEIN L6/L9"/>
    <property type="match status" value="1"/>
</dbReference>
<dbReference type="PANTHER" id="PTHR11655:SF14">
    <property type="entry name" value="LARGE RIBOSOMAL SUBUNIT PROTEIN UL6M"/>
    <property type="match status" value="1"/>
</dbReference>
<dbReference type="Pfam" id="PF00347">
    <property type="entry name" value="Ribosomal_L6"/>
    <property type="match status" value="2"/>
</dbReference>
<dbReference type="PIRSF" id="PIRSF002162">
    <property type="entry name" value="Ribosomal_L6"/>
    <property type="match status" value="1"/>
</dbReference>
<dbReference type="PRINTS" id="PR00059">
    <property type="entry name" value="RIBOSOMALL6"/>
</dbReference>
<dbReference type="SUPFAM" id="SSF56053">
    <property type="entry name" value="Ribosomal protein L6"/>
    <property type="match status" value="2"/>
</dbReference>
<dbReference type="PROSITE" id="PS00525">
    <property type="entry name" value="RIBOSOMAL_L6_1"/>
    <property type="match status" value="1"/>
</dbReference>
<organism>
    <name type="scientific">Streptococcus thermophilus (strain ATCC BAA-250 / LMG 18311)</name>
    <dbReference type="NCBI Taxonomy" id="264199"/>
    <lineage>
        <taxon>Bacteria</taxon>
        <taxon>Bacillati</taxon>
        <taxon>Bacillota</taxon>
        <taxon>Bacilli</taxon>
        <taxon>Lactobacillales</taxon>
        <taxon>Streptococcaceae</taxon>
        <taxon>Streptococcus</taxon>
    </lineage>
</organism>
<keyword id="KW-1185">Reference proteome</keyword>
<keyword id="KW-0687">Ribonucleoprotein</keyword>
<keyword id="KW-0689">Ribosomal protein</keyword>
<keyword id="KW-0694">RNA-binding</keyword>
<keyword id="KW-0699">rRNA-binding</keyword>
<gene>
    <name evidence="1" type="primary">rplF</name>
    <name type="ordered locus">stu1919</name>
</gene>